<accession>Q0VCC0</accession>
<proteinExistence type="evidence at transcript level"/>
<organism>
    <name type="scientific">Bos taurus</name>
    <name type="common">Bovine</name>
    <dbReference type="NCBI Taxonomy" id="9913"/>
    <lineage>
        <taxon>Eukaryota</taxon>
        <taxon>Metazoa</taxon>
        <taxon>Chordata</taxon>
        <taxon>Craniata</taxon>
        <taxon>Vertebrata</taxon>
        <taxon>Euteleostomi</taxon>
        <taxon>Mammalia</taxon>
        <taxon>Eutheria</taxon>
        <taxon>Laurasiatheria</taxon>
        <taxon>Artiodactyla</taxon>
        <taxon>Ruminantia</taxon>
        <taxon>Pecora</taxon>
        <taxon>Bovidae</taxon>
        <taxon>Bovinae</taxon>
        <taxon>Bos</taxon>
    </lineage>
</organism>
<name>CAYP1_BOVIN</name>
<keyword id="KW-0106">Calcium</keyword>
<keyword id="KW-0963">Cytoplasm</keyword>
<keyword id="KW-0479">Metal-binding</keyword>
<keyword id="KW-0597">Phosphoprotein</keyword>
<keyword id="KW-1185">Reference proteome</keyword>
<keyword id="KW-0677">Repeat</keyword>
<reference key="1">
    <citation type="submission" date="2006-08" db="EMBL/GenBank/DDBJ databases">
        <authorList>
            <consortium name="NIH - Mammalian Gene Collection (MGC) project"/>
        </authorList>
    </citation>
    <scope>NUCLEOTIDE SEQUENCE [LARGE SCALE MRNA]</scope>
    <source>
        <strain>Hereford</strain>
        <tissue>Fetal lung</tissue>
    </source>
</reference>
<protein>
    <recommendedName>
        <fullName>Calcyphosin</fullName>
    </recommendedName>
    <alternativeName>
        <fullName>Calcyphosine</fullName>
    </alternativeName>
</protein>
<evidence type="ECO:0000250" key="1"/>
<evidence type="ECO:0000255" key="2"/>
<evidence type="ECO:0000255" key="3">
    <source>
        <dbReference type="PROSITE-ProRule" id="PRU00448"/>
    </source>
</evidence>
<evidence type="ECO:0000305" key="4"/>
<comment type="function">
    <text evidence="4">Calcium-binding protein. May play a role in cellular signaling events (Potential).</text>
</comment>
<comment type="subunit">
    <text evidence="1">Monomer. Does not form oligomers in the presence of calcium (By similarity).</text>
</comment>
<comment type="subcellular location">
    <subcellularLocation>
        <location evidence="1">Cytoplasm</location>
    </subcellularLocation>
</comment>
<sequence>MDAVDTTMEKLRAQCLSRGASGIQGVARFFRRLDQDGSRSLDVRELQRGLAELGLVLDTAEMEGVCRRWDRDGSGTLDLEEFLRALRPPMSQAREAVVTAAFAKLDRSGDGVVTVDDLRGVYSGRTHPKVRSGEWTEEQVLRHFLDNFDSSEKDGQVTLAEFQDYYSGVSASMDTDEEFVAMMTSAWRL</sequence>
<gene>
    <name type="primary">CAPS</name>
</gene>
<dbReference type="EMBL" id="BC120244">
    <property type="protein sequence ID" value="AAI20245.1"/>
    <property type="molecule type" value="mRNA"/>
</dbReference>
<dbReference type="RefSeq" id="NP_001069892.1">
    <property type="nucleotide sequence ID" value="NM_001076424.1"/>
</dbReference>
<dbReference type="SMR" id="Q0VCC0"/>
<dbReference type="FunCoup" id="Q0VCC0">
    <property type="interactions" value="47"/>
</dbReference>
<dbReference type="STRING" id="9913.ENSBTAP00000007972"/>
<dbReference type="PaxDb" id="9913-ENSBTAP00000007972"/>
<dbReference type="GeneID" id="616482"/>
<dbReference type="KEGG" id="bta:616482"/>
<dbReference type="CTD" id="828"/>
<dbReference type="VEuPathDB" id="HostDB:ENSBTAG00000006069"/>
<dbReference type="eggNOG" id="KOG0032">
    <property type="taxonomic scope" value="Eukaryota"/>
</dbReference>
<dbReference type="HOGENOM" id="CLU_036726_1_0_1"/>
<dbReference type="InParanoid" id="Q0VCC0"/>
<dbReference type="OMA" id="NSKHHPK"/>
<dbReference type="OrthoDB" id="444540at2759"/>
<dbReference type="TreeFam" id="TF318191"/>
<dbReference type="Proteomes" id="UP000009136">
    <property type="component" value="Chromosome 7"/>
</dbReference>
<dbReference type="Bgee" id="ENSBTAG00000006069">
    <property type="expression patterns" value="Expressed in oviduct epithelium and 104 other cell types or tissues"/>
</dbReference>
<dbReference type="GO" id="GO:0005737">
    <property type="term" value="C:cytoplasm"/>
    <property type="evidence" value="ECO:0007669"/>
    <property type="project" value="UniProtKB-SubCell"/>
</dbReference>
<dbReference type="GO" id="GO:0005509">
    <property type="term" value="F:calcium ion binding"/>
    <property type="evidence" value="ECO:0007669"/>
    <property type="project" value="InterPro"/>
</dbReference>
<dbReference type="FunFam" id="1.10.238.10:FF:000294">
    <property type="entry name" value="Calcyphosin"/>
    <property type="match status" value="1"/>
</dbReference>
<dbReference type="FunFam" id="1.10.238.10:FF:000329">
    <property type="entry name" value="calcyphosin isoform X2"/>
    <property type="match status" value="1"/>
</dbReference>
<dbReference type="Gene3D" id="1.10.238.10">
    <property type="entry name" value="EF-hand"/>
    <property type="match status" value="2"/>
</dbReference>
<dbReference type="InterPro" id="IPR051581">
    <property type="entry name" value="Ca-bind_SignalingProt"/>
</dbReference>
<dbReference type="InterPro" id="IPR011992">
    <property type="entry name" value="EF-hand-dom_pair"/>
</dbReference>
<dbReference type="InterPro" id="IPR018247">
    <property type="entry name" value="EF_Hand_1_Ca_BS"/>
</dbReference>
<dbReference type="InterPro" id="IPR002048">
    <property type="entry name" value="EF_hand_dom"/>
</dbReference>
<dbReference type="PANTHER" id="PTHR34524">
    <property type="entry name" value="CALCYPHOSIN"/>
    <property type="match status" value="1"/>
</dbReference>
<dbReference type="PANTHER" id="PTHR34524:SF2">
    <property type="entry name" value="CALCYPHOSIN"/>
    <property type="match status" value="1"/>
</dbReference>
<dbReference type="Pfam" id="PF13499">
    <property type="entry name" value="EF-hand_7"/>
    <property type="match status" value="2"/>
</dbReference>
<dbReference type="SMART" id="SM00054">
    <property type="entry name" value="EFh"/>
    <property type="match status" value="4"/>
</dbReference>
<dbReference type="SUPFAM" id="SSF47473">
    <property type="entry name" value="EF-hand"/>
    <property type="match status" value="1"/>
</dbReference>
<dbReference type="PROSITE" id="PS00018">
    <property type="entry name" value="EF_HAND_1"/>
    <property type="match status" value="3"/>
</dbReference>
<dbReference type="PROSITE" id="PS50222">
    <property type="entry name" value="EF_HAND_2"/>
    <property type="match status" value="4"/>
</dbReference>
<feature type="chain" id="PRO_0000268164" description="Calcyphosin">
    <location>
        <begin position="1"/>
        <end position="189"/>
    </location>
</feature>
<feature type="domain" description="EF-hand 1" evidence="3">
    <location>
        <begin position="21"/>
        <end position="56"/>
    </location>
</feature>
<feature type="domain" description="EF-hand 2" evidence="3">
    <location>
        <begin position="57"/>
        <end position="92"/>
    </location>
</feature>
<feature type="domain" description="EF-hand 3" evidence="3">
    <location>
        <begin position="93"/>
        <end position="128"/>
    </location>
</feature>
<feature type="domain" description="EF-hand 4" evidence="3">
    <location>
        <begin position="136"/>
        <end position="172"/>
    </location>
</feature>
<feature type="binding site" evidence="3">
    <location>
        <position position="34"/>
    </location>
    <ligand>
        <name>Ca(2+)</name>
        <dbReference type="ChEBI" id="CHEBI:29108"/>
        <label>1</label>
    </ligand>
</feature>
<feature type="binding site" evidence="3">
    <location>
        <position position="36"/>
    </location>
    <ligand>
        <name>Ca(2+)</name>
        <dbReference type="ChEBI" id="CHEBI:29108"/>
        <label>1</label>
    </ligand>
</feature>
<feature type="binding site" evidence="3">
    <location>
        <position position="38"/>
    </location>
    <ligand>
        <name>Ca(2+)</name>
        <dbReference type="ChEBI" id="CHEBI:29108"/>
        <label>1</label>
    </ligand>
</feature>
<feature type="binding site" evidence="3">
    <location>
        <position position="40"/>
    </location>
    <ligand>
        <name>Ca(2+)</name>
        <dbReference type="ChEBI" id="CHEBI:29108"/>
        <label>1</label>
    </ligand>
</feature>
<feature type="binding site" evidence="3">
    <location>
        <position position="45"/>
    </location>
    <ligand>
        <name>Ca(2+)</name>
        <dbReference type="ChEBI" id="CHEBI:29108"/>
        <label>1</label>
    </ligand>
</feature>
<feature type="binding site" evidence="3">
    <location>
        <position position="70"/>
    </location>
    <ligand>
        <name>Ca(2+)</name>
        <dbReference type="ChEBI" id="CHEBI:29108"/>
        <label>2</label>
    </ligand>
</feature>
<feature type="binding site" evidence="3">
    <location>
        <position position="72"/>
    </location>
    <ligand>
        <name>Ca(2+)</name>
        <dbReference type="ChEBI" id="CHEBI:29108"/>
        <label>2</label>
    </ligand>
</feature>
<feature type="binding site" evidence="3">
    <location>
        <position position="74"/>
    </location>
    <ligand>
        <name>Ca(2+)</name>
        <dbReference type="ChEBI" id="CHEBI:29108"/>
        <label>2</label>
    </ligand>
</feature>
<feature type="binding site" evidence="3">
    <location>
        <position position="76"/>
    </location>
    <ligand>
        <name>Ca(2+)</name>
        <dbReference type="ChEBI" id="CHEBI:29108"/>
        <label>2</label>
    </ligand>
</feature>
<feature type="binding site" evidence="3">
    <location>
        <position position="81"/>
    </location>
    <ligand>
        <name>Ca(2+)</name>
        <dbReference type="ChEBI" id="CHEBI:29108"/>
        <label>2</label>
    </ligand>
</feature>
<feature type="binding site" evidence="3">
    <location>
        <position position="106"/>
    </location>
    <ligand>
        <name>Ca(2+)</name>
        <dbReference type="ChEBI" id="CHEBI:29108"/>
        <label>3</label>
    </ligand>
</feature>
<feature type="binding site" evidence="3">
    <location>
        <position position="108"/>
    </location>
    <ligand>
        <name>Ca(2+)</name>
        <dbReference type="ChEBI" id="CHEBI:29108"/>
        <label>3</label>
    </ligand>
</feature>
<feature type="binding site" evidence="3">
    <location>
        <position position="110"/>
    </location>
    <ligand>
        <name>Ca(2+)</name>
        <dbReference type="ChEBI" id="CHEBI:29108"/>
        <label>3</label>
    </ligand>
</feature>
<feature type="binding site" evidence="3">
    <location>
        <position position="117"/>
    </location>
    <ligand>
        <name>Ca(2+)</name>
        <dbReference type="ChEBI" id="CHEBI:29108"/>
        <label>3</label>
    </ligand>
</feature>
<feature type="modified residue" description="Phosphoserine; by PKA" evidence="2">
    <location>
        <position position="40"/>
    </location>
</feature>